<organism>
    <name type="scientific">Rattus norvegicus</name>
    <name type="common">Rat</name>
    <dbReference type="NCBI Taxonomy" id="10116"/>
    <lineage>
        <taxon>Eukaryota</taxon>
        <taxon>Metazoa</taxon>
        <taxon>Chordata</taxon>
        <taxon>Craniata</taxon>
        <taxon>Vertebrata</taxon>
        <taxon>Euteleostomi</taxon>
        <taxon>Mammalia</taxon>
        <taxon>Eutheria</taxon>
        <taxon>Euarchontoglires</taxon>
        <taxon>Glires</taxon>
        <taxon>Rodentia</taxon>
        <taxon>Myomorpha</taxon>
        <taxon>Muroidea</taxon>
        <taxon>Muridae</taxon>
        <taxon>Murinae</taxon>
        <taxon>Rattus</taxon>
    </lineage>
</organism>
<proteinExistence type="evidence at protein level"/>
<reference key="1">
    <citation type="submission" date="2000-12" db="EMBL/GenBank/DDBJ databases">
        <title>Gene cloning and characterization of rat CDP-diacylglycerol synthase type 2 (CDS2).</title>
        <authorList>
            <person name="Saino-Saito S."/>
        </authorList>
    </citation>
    <scope>NUCLEOTIDE SEQUENCE [MRNA]</scope>
    <source>
        <strain>Wistar</strain>
        <tissue>Brain</tissue>
    </source>
</reference>
<reference key="2">
    <citation type="journal article" date="2012" name="Nat. Commun.">
        <title>Quantitative maps of protein phosphorylation sites across 14 different rat organs and tissues.</title>
        <authorList>
            <person name="Lundby A."/>
            <person name="Secher A."/>
            <person name="Lage K."/>
            <person name="Nordsborg N.B."/>
            <person name="Dmytriyev A."/>
            <person name="Lundby C."/>
            <person name="Olsen J.V."/>
        </authorList>
    </citation>
    <scope>PHOSPHORYLATION [LARGE SCALE ANALYSIS] AT SER-20; THR-30 AND SER-32</scope>
    <scope>IDENTIFICATION BY MASS SPECTROMETRY [LARGE SCALE ANALYSIS]</scope>
</reference>
<reference key="3">
    <citation type="journal article" date="2018" name="Biochim. Biophys. Acta">
        <title>Mitochondrial CDP-diacylglycerol synthase activity is due to the peripheral protein, TAMM41 and not due to the integral membrane protein, CDP-diacylglycerol synthase 1.</title>
        <authorList>
            <person name="Blunsom N.J."/>
            <person name="Gomez-Espinosa E."/>
            <person name="Ashlin T.G."/>
            <person name="Cockcroft S."/>
        </authorList>
    </citation>
    <scope>FUNCTION</scope>
    <scope>CATALYTIC ACTIVITY</scope>
    <scope>SUBUNIT</scope>
    <scope>SUBCELLULAR LOCATION</scope>
</reference>
<dbReference type="EC" id="2.7.7.41" evidence="5"/>
<dbReference type="EMBL" id="AB052898">
    <property type="protein sequence ID" value="BAB61043.1"/>
    <property type="molecule type" value="mRNA"/>
</dbReference>
<dbReference type="RefSeq" id="NP_446095.1">
    <property type="nucleotide sequence ID" value="NM_053643.1"/>
</dbReference>
<dbReference type="BioGRID" id="250280">
    <property type="interactions" value="1"/>
</dbReference>
<dbReference type="FunCoup" id="Q91XU8">
    <property type="interactions" value="3638"/>
</dbReference>
<dbReference type="STRING" id="10116.ENSRNOP00000028888"/>
<dbReference type="iPTMnet" id="Q91XU8"/>
<dbReference type="PhosphoSitePlus" id="Q91XU8"/>
<dbReference type="SwissPalm" id="Q91XU8"/>
<dbReference type="jPOST" id="Q91XU8"/>
<dbReference type="PaxDb" id="10116-ENSRNOP00000028888"/>
<dbReference type="GeneID" id="114101"/>
<dbReference type="KEGG" id="rno:114101"/>
<dbReference type="UCSC" id="RGD:621186">
    <property type="organism name" value="rat"/>
</dbReference>
<dbReference type="AGR" id="RGD:621186"/>
<dbReference type="CTD" id="8760"/>
<dbReference type="RGD" id="621186">
    <property type="gene designation" value="Cds2"/>
</dbReference>
<dbReference type="eggNOG" id="KOG1440">
    <property type="taxonomic scope" value="Eukaryota"/>
</dbReference>
<dbReference type="InParanoid" id="Q91XU8"/>
<dbReference type="PhylomeDB" id="Q91XU8"/>
<dbReference type="Reactome" id="R-RNO-1483148">
    <property type="pathway name" value="Synthesis of PG"/>
</dbReference>
<dbReference type="UniPathway" id="UPA00557">
    <property type="reaction ID" value="UER00614"/>
</dbReference>
<dbReference type="PRO" id="PR:Q91XU8"/>
<dbReference type="Proteomes" id="UP000002494">
    <property type="component" value="Unplaced"/>
</dbReference>
<dbReference type="GO" id="GO:0005783">
    <property type="term" value="C:endoplasmic reticulum"/>
    <property type="evidence" value="ECO:0000250"/>
    <property type="project" value="UniProtKB"/>
</dbReference>
<dbReference type="GO" id="GO:0005789">
    <property type="term" value="C:endoplasmic reticulum membrane"/>
    <property type="evidence" value="ECO:0000318"/>
    <property type="project" value="GO_Central"/>
</dbReference>
<dbReference type="GO" id="GO:0016020">
    <property type="term" value="C:membrane"/>
    <property type="evidence" value="ECO:0000314"/>
    <property type="project" value="UniProtKB"/>
</dbReference>
<dbReference type="GO" id="GO:0004605">
    <property type="term" value="F:phosphatidate cytidylyltransferase activity"/>
    <property type="evidence" value="ECO:0000314"/>
    <property type="project" value="UniProtKB"/>
</dbReference>
<dbReference type="GO" id="GO:0016024">
    <property type="term" value="P:CDP-diacylglycerol biosynthetic process"/>
    <property type="evidence" value="ECO:0000250"/>
    <property type="project" value="UniProtKB"/>
</dbReference>
<dbReference type="GO" id="GO:0140042">
    <property type="term" value="P:lipid droplet formation"/>
    <property type="evidence" value="ECO:0000250"/>
    <property type="project" value="UniProtKB"/>
</dbReference>
<dbReference type="InterPro" id="IPR000374">
    <property type="entry name" value="PC_trans"/>
</dbReference>
<dbReference type="InterPro" id="IPR016720">
    <property type="entry name" value="PC_Trfase_euk"/>
</dbReference>
<dbReference type="PANTHER" id="PTHR13773">
    <property type="entry name" value="PHOSPHATIDATE CYTIDYLYLTRANSFERASE"/>
    <property type="match status" value="1"/>
</dbReference>
<dbReference type="PANTHER" id="PTHR13773:SF4">
    <property type="entry name" value="PHOSPHATIDATE CYTIDYLYLTRANSFERASE 2"/>
    <property type="match status" value="1"/>
</dbReference>
<dbReference type="Pfam" id="PF01148">
    <property type="entry name" value="CTP_transf_1"/>
    <property type="match status" value="1"/>
</dbReference>
<dbReference type="PIRSF" id="PIRSF018269">
    <property type="entry name" value="PC_trans_euk"/>
    <property type="match status" value="1"/>
</dbReference>
<dbReference type="PROSITE" id="PS01315">
    <property type="entry name" value="CDS"/>
    <property type="match status" value="1"/>
</dbReference>
<sequence length="443" mass="51323">MTELRQRAVREDAPPEDKESESEAKLDGETASDSESRAETAPPPTSIDDTPEVLNRALSNLSSRWKNWWVRGILTMAMIAFFFIIIYLGPMVLMMIVMCVQIKCFHEIITIGYNVYHSYDLPWFRTLSWYFLLCVNYFFYGETVTDYFFTLVQREEPLRILSKYHRFISFTLYLTGFCMFVLSLVKKHYRLQFYMFGWTHVTLLIVVTQSHLVIHNLFEGMIWFIVPISCVICNDIMAYMFGFFFGRTPLIKLSPKKTWEGFIGGFFATVVFGLLLSYVMSGYRCFVCPVEYNNDTNSFTVDCEPSDLFRLQEYNIPGVIQSLVGWKTMRMYPFQIHSALSTFASLIGPFGGFFASGFKRAFKIKDFANTIPGHGGIMDRFDCQYLMATFVNVYIASFIRGPNPSKLIQQFLTLRPDQQLHIFNTLKSHLTDKGILMSALEEE</sequence>
<name>CDS2_RAT</name>
<protein>
    <recommendedName>
        <fullName evidence="6">Phosphatidate cytidylyltransferase 2</fullName>
        <ecNumber evidence="5">2.7.7.41</ecNumber>
    </recommendedName>
    <alternativeName>
        <fullName>CDP-DAG synthase 2</fullName>
    </alternativeName>
    <alternativeName>
        <fullName>CDP-DG synthase 2</fullName>
    </alternativeName>
    <alternativeName>
        <fullName>CDP-diacylglycerol synthase 2</fullName>
        <shortName>CDS 2</shortName>
    </alternativeName>
    <alternativeName>
        <fullName>CDP-diglyceride pyrophosphorylase 2</fullName>
    </alternativeName>
    <alternativeName>
        <fullName>CDP-diglyceride synthase 2</fullName>
    </alternativeName>
    <alternativeName>
        <fullName>CTP:phosphatidate cytidylyltransferase 2</fullName>
    </alternativeName>
</protein>
<evidence type="ECO:0000250" key="1">
    <source>
        <dbReference type="UniProtKB" id="O95674"/>
    </source>
</evidence>
<evidence type="ECO:0000250" key="2">
    <source>
        <dbReference type="UniProtKB" id="Q99L43"/>
    </source>
</evidence>
<evidence type="ECO:0000255" key="3"/>
<evidence type="ECO:0000256" key="4">
    <source>
        <dbReference type="SAM" id="MobiDB-lite"/>
    </source>
</evidence>
<evidence type="ECO:0000269" key="5">
    <source>
    </source>
</evidence>
<evidence type="ECO:0000305" key="6"/>
<evidence type="ECO:0000312" key="7">
    <source>
        <dbReference type="RGD" id="621186"/>
    </source>
</evidence>
<evidence type="ECO:0007744" key="8">
    <source>
    </source>
</evidence>
<gene>
    <name evidence="7" type="primary">Cds2</name>
</gene>
<comment type="function">
    <text evidence="1 5">Catalyzes the conversion of phosphatidic acid (PA) to CDP-diacylglycerol (CDP-DAG), an essential intermediate in the synthesis of phosphatidylglycerol, cardiolipin and phosphatidylinositol (PubMed:29253589). Exhibits specificity for the nature of the acyl chains at the sn-1 and sn-2 positions in the substrate, PA and the preferred acyl chain composition is 1-stearoyl-2-arachidonoyl-sn-phosphatidic acid (By similarity). Plays an important role in regulating the growth and maturation of lipid droplets which are storage organelles at the center of lipid and energy homeostasis (By similarity).</text>
</comment>
<comment type="catalytic activity">
    <reaction evidence="5">
        <text>a 1,2-diacyl-sn-glycero-3-phosphate + CTP + H(+) = a CDP-1,2-diacyl-sn-glycerol + diphosphate</text>
        <dbReference type="Rhea" id="RHEA:16229"/>
        <dbReference type="ChEBI" id="CHEBI:15378"/>
        <dbReference type="ChEBI" id="CHEBI:33019"/>
        <dbReference type="ChEBI" id="CHEBI:37563"/>
        <dbReference type="ChEBI" id="CHEBI:58332"/>
        <dbReference type="ChEBI" id="CHEBI:58608"/>
        <dbReference type="EC" id="2.7.7.41"/>
    </reaction>
    <physiologicalReaction direction="left-to-right" evidence="5">
        <dbReference type="Rhea" id="RHEA:16230"/>
    </physiologicalReaction>
</comment>
<comment type="catalytic activity">
    <reaction evidence="1">
        <text>1-octadecanoyl-2-(5Z,8Z,11Z,14Z-eicosatetraenoyl)-sn-glycero-3-phosphate + CTP + H(+) = 1-octadecanoyl-2-(5Z,8Z,11Z,14Z-eicosatetraenoyl)-sn-glycero-3-cytidine-5'-diphosphate + diphosphate</text>
        <dbReference type="Rhea" id="RHEA:45648"/>
        <dbReference type="ChEBI" id="CHEBI:15378"/>
        <dbReference type="ChEBI" id="CHEBI:33019"/>
        <dbReference type="ChEBI" id="CHEBI:37563"/>
        <dbReference type="ChEBI" id="CHEBI:77091"/>
        <dbReference type="ChEBI" id="CHEBI:85349"/>
    </reaction>
    <physiologicalReaction direction="left-to-right" evidence="1">
        <dbReference type="Rhea" id="RHEA:45649"/>
    </physiologicalReaction>
</comment>
<comment type="catalytic activity">
    <reaction evidence="1">
        <text>1-octadecanoyl-2-(9Z,12Z-octadecadienoyl)-sn-glycero-3-phosphate + CTP + H(+) = 1-octadecanoyl-2-(9Z,12Z-octadecadienoyl)-sn-glycero-3-cytidine-5'-diphosphate + diphosphate</text>
        <dbReference type="Rhea" id="RHEA:45660"/>
        <dbReference type="ChEBI" id="CHEBI:15378"/>
        <dbReference type="ChEBI" id="CHEBI:33019"/>
        <dbReference type="ChEBI" id="CHEBI:37563"/>
        <dbReference type="ChEBI" id="CHEBI:77098"/>
        <dbReference type="ChEBI" id="CHEBI:85352"/>
    </reaction>
    <physiologicalReaction direction="left-to-right" evidence="1">
        <dbReference type="Rhea" id="RHEA:45661"/>
    </physiologicalReaction>
</comment>
<comment type="catalytic activity">
    <reaction evidence="1">
        <text>1-hexadecanoyl-2-(5Z,8Z,11Z,14Z-eicosatetraenoyl)-sn-glycero-3-phosphate + CTP + H(+) = 1-hexadecanoyl-2-(5Z,8Z,11Z,14Z-eicosatetraenoyl)-sn-glycero-3-cytidine-5'-diphosphate + diphosphate</text>
        <dbReference type="Rhea" id="RHEA:45652"/>
        <dbReference type="ChEBI" id="CHEBI:15378"/>
        <dbReference type="ChEBI" id="CHEBI:33019"/>
        <dbReference type="ChEBI" id="CHEBI:37563"/>
        <dbReference type="ChEBI" id="CHEBI:72864"/>
        <dbReference type="ChEBI" id="CHEBI:85350"/>
    </reaction>
    <physiologicalReaction direction="left-to-right" evidence="1">
        <dbReference type="Rhea" id="RHEA:45653"/>
    </physiologicalReaction>
</comment>
<comment type="catalytic activity">
    <reaction evidence="1">
        <text>1,2-di-(5Z,8Z,11Z,14Z)-eicosatetraenoyl-sn-glycero-3-phosphate + CTP + H(+) = 1,2-di-(5Z,8Z,11Z,14Z-eicosatetraenoyl)-sn-glycero-3-cytidine-5'-diphosphate + diphosphate</text>
        <dbReference type="Rhea" id="RHEA:45656"/>
        <dbReference type="ChEBI" id="CHEBI:15378"/>
        <dbReference type="ChEBI" id="CHEBI:33019"/>
        <dbReference type="ChEBI" id="CHEBI:37563"/>
        <dbReference type="ChEBI" id="CHEBI:77126"/>
        <dbReference type="ChEBI" id="CHEBI:85351"/>
    </reaction>
    <physiologicalReaction direction="left-to-right" evidence="1">
        <dbReference type="Rhea" id="RHEA:45657"/>
    </physiologicalReaction>
</comment>
<comment type="catalytic activity">
    <reaction evidence="1">
        <text>1-octadecanoyl-2-(9Z-octadecenoyl)-sn-glycero-3-phosphate + CTP + H(+) = 1-octadecanoyl-2-(9Z-octadecenoyl)-sn-glycero-3-cytidine-5'-diphosphate + diphosphate</text>
        <dbReference type="Rhea" id="RHEA:45664"/>
        <dbReference type="ChEBI" id="CHEBI:15378"/>
        <dbReference type="ChEBI" id="CHEBI:33019"/>
        <dbReference type="ChEBI" id="CHEBI:37563"/>
        <dbReference type="ChEBI" id="CHEBI:74560"/>
        <dbReference type="ChEBI" id="CHEBI:85353"/>
    </reaction>
    <physiologicalReaction direction="left-to-right" evidence="1">
        <dbReference type="Rhea" id="RHEA:45665"/>
    </physiologicalReaction>
</comment>
<comment type="catalytic activity">
    <reaction evidence="1">
        <text>1-octadecanoyl-2-(4Z,7Z,10Z,13Z,16Z,19Z-docosahexaenoyl)-sn-glycero-3-phosphate + CTP + H(+) = 1-octadecanoyl-2-(4Z,7Z,10Z,13Z,16Z,19Z-docosahexaenoyl)-sn-glycero-3-cytidine-5'-diphosphate + diphosphate</text>
        <dbReference type="Rhea" id="RHEA:45668"/>
        <dbReference type="ChEBI" id="CHEBI:15378"/>
        <dbReference type="ChEBI" id="CHEBI:33019"/>
        <dbReference type="ChEBI" id="CHEBI:37563"/>
        <dbReference type="ChEBI" id="CHEBI:77130"/>
        <dbReference type="ChEBI" id="CHEBI:85354"/>
    </reaction>
    <physiologicalReaction direction="left-to-right" evidence="1">
        <dbReference type="Rhea" id="RHEA:45669"/>
    </physiologicalReaction>
</comment>
<comment type="catalytic activity">
    <reaction evidence="1">
        <text>1,2-di-(9Z,12Z-octadecadienoyl)-sn-glycero-3-phosphate + CTP + H(+) = 1,2-di-(9Z,12Z-octadecadienoyl)-sn-glycero-3-cytidine-5'-diphosphate + diphosphate</text>
        <dbReference type="Rhea" id="RHEA:45672"/>
        <dbReference type="ChEBI" id="CHEBI:15378"/>
        <dbReference type="ChEBI" id="CHEBI:33019"/>
        <dbReference type="ChEBI" id="CHEBI:37563"/>
        <dbReference type="ChEBI" id="CHEBI:77128"/>
        <dbReference type="ChEBI" id="CHEBI:85355"/>
    </reaction>
    <physiologicalReaction direction="left-to-right" evidence="1">
        <dbReference type="Rhea" id="RHEA:45673"/>
    </physiologicalReaction>
</comment>
<comment type="catalytic activity">
    <reaction evidence="1">
        <text>1,2-di-(9Z-octadecenoyl)-sn-glycero-3-phosphate + CTP + H(+) = 1,2-di-(9Z-octadecenoyl)-sn-glycero-3-cytidine-5'-diphosphate + diphosphate</text>
        <dbReference type="Rhea" id="RHEA:45676"/>
        <dbReference type="ChEBI" id="CHEBI:15378"/>
        <dbReference type="ChEBI" id="CHEBI:33019"/>
        <dbReference type="ChEBI" id="CHEBI:37563"/>
        <dbReference type="ChEBI" id="CHEBI:74546"/>
        <dbReference type="ChEBI" id="CHEBI:85356"/>
    </reaction>
    <physiologicalReaction direction="left-to-right" evidence="1">
        <dbReference type="Rhea" id="RHEA:45677"/>
    </physiologicalReaction>
</comment>
<comment type="pathway">
    <text>Phospholipid metabolism; CDP-diacylglycerol biosynthesis; CDP-diacylglycerol from sn-glycerol 3-phosphate: step 3/3.</text>
</comment>
<comment type="subunit">
    <text evidence="5">Homodimer.</text>
</comment>
<comment type="subcellular location">
    <subcellularLocation>
        <location evidence="5">Endoplasmic reticulum membrane</location>
        <topology evidence="3">Multi-pass membrane protein</topology>
    </subcellularLocation>
</comment>
<comment type="similarity">
    <text evidence="6">Belongs to the CDS family.</text>
</comment>
<feature type="chain" id="PRO_0000090718" description="Phosphatidate cytidylyltransferase 2">
    <location>
        <begin position="1"/>
        <end position="443"/>
    </location>
</feature>
<feature type="transmembrane region" description="Helical" evidence="3">
    <location>
        <begin position="78"/>
        <end position="98"/>
    </location>
</feature>
<feature type="transmembrane region" description="Helical" evidence="3">
    <location>
        <begin position="129"/>
        <end position="149"/>
    </location>
</feature>
<feature type="transmembrane region" description="Helical" evidence="3">
    <location>
        <begin position="165"/>
        <end position="185"/>
    </location>
</feature>
<feature type="transmembrane region" description="Helical" evidence="3">
    <location>
        <begin position="212"/>
        <end position="232"/>
    </location>
</feature>
<feature type="transmembrane region" description="Helical" evidence="3">
    <location>
        <begin position="261"/>
        <end position="281"/>
    </location>
</feature>
<feature type="transmembrane region" description="Helical" evidence="3">
    <location>
        <begin position="338"/>
        <end position="358"/>
    </location>
</feature>
<feature type="region of interest" description="Disordered" evidence="4">
    <location>
        <begin position="1"/>
        <end position="51"/>
    </location>
</feature>
<feature type="compositionally biased region" description="Basic and acidic residues" evidence="4">
    <location>
        <begin position="1"/>
        <end position="38"/>
    </location>
</feature>
<feature type="modified residue" description="Phosphoserine" evidence="8">
    <location>
        <position position="20"/>
    </location>
</feature>
<feature type="modified residue" description="Phosphothreonine" evidence="8">
    <location>
        <position position="30"/>
    </location>
</feature>
<feature type="modified residue" description="Phosphoserine" evidence="8">
    <location>
        <position position="32"/>
    </location>
</feature>
<feature type="modified residue" description="Phosphoserine" evidence="1">
    <location>
        <position position="34"/>
    </location>
</feature>
<feature type="modified residue" description="Phosphoserine" evidence="1">
    <location>
        <position position="36"/>
    </location>
</feature>
<feature type="modified residue" description="Phosphothreonine" evidence="2">
    <location>
        <position position="50"/>
    </location>
</feature>
<accession>Q91XU8</accession>
<keyword id="KW-0256">Endoplasmic reticulum</keyword>
<keyword id="KW-0444">Lipid biosynthesis</keyword>
<keyword id="KW-0443">Lipid metabolism</keyword>
<keyword id="KW-0472">Membrane</keyword>
<keyword id="KW-0548">Nucleotidyltransferase</keyword>
<keyword id="KW-0594">Phospholipid biosynthesis</keyword>
<keyword id="KW-1208">Phospholipid metabolism</keyword>
<keyword id="KW-0597">Phosphoprotein</keyword>
<keyword id="KW-1185">Reference proteome</keyword>
<keyword id="KW-0808">Transferase</keyword>
<keyword id="KW-0812">Transmembrane</keyword>
<keyword id="KW-1133">Transmembrane helix</keyword>